<reference key="1">
    <citation type="journal article" date="2004" name="Genome Res.">
        <title>The status, quality, and expansion of the NIH full-length cDNA project: the Mammalian Gene Collection (MGC).</title>
        <authorList>
            <consortium name="The MGC Project Team"/>
        </authorList>
    </citation>
    <scope>NUCLEOTIDE SEQUENCE [LARGE SCALE MRNA] (ISOFORM 1)</scope>
    <source>
        <strain>C57BL/6J</strain>
        <tissue>Brain</tissue>
        <tissue>Eye</tissue>
    </source>
</reference>
<reference key="2">
    <citation type="journal article" date="2005" name="Science">
        <title>The transcriptional landscape of the mammalian genome.</title>
        <authorList>
            <person name="Carninci P."/>
            <person name="Kasukawa T."/>
            <person name="Katayama S."/>
            <person name="Gough J."/>
            <person name="Frith M.C."/>
            <person name="Maeda N."/>
            <person name="Oyama R."/>
            <person name="Ravasi T."/>
            <person name="Lenhard B."/>
            <person name="Wells C."/>
            <person name="Kodzius R."/>
            <person name="Shimokawa K."/>
            <person name="Bajic V.B."/>
            <person name="Brenner S.E."/>
            <person name="Batalov S."/>
            <person name="Forrest A.R."/>
            <person name="Zavolan M."/>
            <person name="Davis M.J."/>
            <person name="Wilming L.G."/>
            <person name="Aidinis V."/>
            <person name="Allen J.E."/>
            <person name="Ambesi-Impiombato A."/>
            <person name="Apweiler R."/>
            <person name="Aturaliya R.N."/>
            <person name="Bailey T.L."/>
            <person name="Bansal M."/>
            <person name="Baxter L."/>
            <person name="Beisel K.W."/>
            <person name="Bersano T."/>
            <person name="Bono H."/>
            <person name="Chalk A.M."/>
            <person name="Chiu K.P."/>
            <person name="Choudhary V."/>
            <person name="Christoffels A."/>
            <person name="Clutterbuck D.R."/>
            <person name="Crowe M.L."/>
            <person name="Dalla E."/>
            <person name="Dalrymple B.P."/>
            <person name="de Bono B."/>
            <person name="Della Gatta G."/>
            <person name="di Bernardo D."/>
            <person name="Down T."/>
            <person name="Engstrom P."/>
            <person name="Fagiolini M."/>
            <person name="Faulkner G."/>
            <person name="Fletcher C.F."/>
            <person name="Fukushima T."/>
            <person name="Furuno M."/>
            <person name="Futaki S."/>
            <person name="Gariboldi M."/>
            <person name="Georgii-Hemming P."/>
            <person name="Gingeras T.R."/>
            <person name="Gojobori T."/>
            <person name="Green R.E."/>
            <person name="Gustincich S."/>
            <person name="Harbers M."/>
            <person name="Hayashi Y."/>
            <person name="Hensch T.K."/>
            <person name="Hirokawa N."/>
            <person name="Hill D."/>
            <person name="Huminiecki L."/>
            <person name="Iacono M."/>
            <person name="Ikeo K."/>
            <person name="Iwama A."/>
            <person name="Ishikawa T."/>
            <person name="Jakt M."/>
            <person name="Kanapin A."/>
            <person name="Katoh M."/>
            <person name="Kawasawa Y."/>
            <person name="Kelso J."/>
            <person name="Kitamura H."/>
            <person name="Kitano H."/>
            <person name="Kollias G."/>
            <person name="Krishnan S.P."/>
            <person name="Kruger A."/>
            <person name="Kummerfeld S.K."/>
            <person name="Kurochkin I.V."/>
            <person name="Lareau L.F."/>
            <person name="Lazarevic D."/>
            <person name="Lipovich L."/>
            <person name="Liu J."/>
            <person name="Liuni S."/>
            <person name="McWilliam S."/>
            <person name="Madan Babu M."/>
            <person name="Madera M."/>
            <person name="Marchionni L."/>
            <person name="Matsuda H."/>
            <person name="Matsuzawa S."/>
            <person name="Miki H."/>
            <person name="Mignone F."/>
            <person name="Miyake S."/>
            <person name="Morris K."/>
            <person name="Mottagui-Tabar S."/>
            <person name="Mulder N."/>
            <person name="Nakano N."/>
            <person name="Nakauchi H."/>
            <person name="Ng P."/>
            <person name="Nilsson R."/>
            <person name="Nishiguchi S."/>
            <person name="Nishikawa S."/>
            <person name="Nori F."/>
            <person name="Ohara O."/>
            <person name="Okazaki Y."/>
            <person name="Orlando V."/>
            <person name="Pang K.C."/>
            <person name="Pavan W.J."/>
            <person name="Pavesi G."/>
            <person name="Pesole G."/>
            <person name="Petrovsky N."/>
            <person name="Piazza S."/>
            <person name="Reed J."/>
            <person name="Reid J.F."/>
            <person name="Ring B.Z."/>
            <person name="Ringwald M."/>
            <person name="Rost B."/>
            <person name="Ruan Y."/>
            <person name="Salzberg S.L."/>
            <person name="Sandelin A."/>
            <person name="Schneider C."/>
            <person name="Schoenbach C."/>
            <person name="Sekiguchi K."/>
            <person name="Semple C.A."/>
            <person name="Seno S."/>
            <person name="Sessa L."/>
            <person name="Sheng Y."/>
            <person name="Shibata Y."/>
            <person name="Shimada H."/>
            <person name="Shimada K."/>
            <person name="Silva D."/>
            <person name="Sinclair B."/>
            <person name="Sperling S."/>
            <person name="Stupka E."/>
            <person name="Sugiura K."/>
            <person name="Sultana R."/>
            <person name="Takenaka Y."/>
            <person name="Taki K."/>
            <person name="Tammoja K."/>
            <person name="Tan S.L."/>
            <person name="Tang S."/>
            <person name="Taylor M.S."/>
            <person name="Tegner J."/>
            <person name="Teichmann S.A."/>
            <person name="Ueda H.R."/>
            <person name="van Nimwegen E."/>
            <person name="Verardo R."/>
            <person name="Wei C.L."/>
            <person name="Yagi K."/>
            <person name="Yamanishi H."/>
            <person name="Zabarovsky E."/>
            <person name="Zhu S."/>
            <person name="Zimmer A."/>
            <person name="Hide W."/>
            <person name="Bult C."/>
            <person name="Grimmond S.M."/>
            <person name="Teasdale R.D."/>
            <person name="Liu E.T."/>
            <person name="Brusic V."/>
            <person name="Quackenbush J."/>
            <person name="Wahlestedt C."/>
            <person name="Mattick J.S."/>
            <person name="Hume D.A."/>
            <person name="Kai C."/>
            <person name="Sasaki D."/>
            <person name="Tomaru Y."/>
            <person name="Fukuda S."/>
            <person name="Kanamori-Katayama M."/>
            <person name="Suzuki M."/>
            <person name="Aoki J."/>
            <person name="Arakawa T."/>
            <person name="Iida J."/>
            <person name="Imamura K."/>
            <person name="Itoh M."/>
            <person name="Kato T."/>
            <person name="Kawaji H."/>
            <person name="Kawagashira N."/>
            <person name="Kawashima T."/>
            <person name="Kojima M."/>
            <person name="Kondo S."/>
            <person name="Konno H."/>
            <person name="Nakano K."/>
            <person name="Ninomiya N."/>
            <person name="Nishio T."/>
            <person name="Okada M."/>
            <person name="Plessy C."/>
            <person name="Shibata K."/>
            <person name="Shiraki T."/>
            <person name="Suzuki S."/>
            <person name="Tagami M."/>
            <person name="Waki K."/>
            <person name="Watahiki A."/>
            <person name="Okamura-Oho Y."/>
            <person name="Suzuki H."/>
            <person name="Kawai J."/>
            <person name="Hayashizaki Y."/>
        </authorList>
    </citation>
    <scope>NUCLEOTIDE SEQUENCE [LARGE SCALE MRNA] OF 3-167 (ISOFORM 1)</scope>
    <scope>NUCLEOTIDE SEQUENCE [LARGE SCALE MRNA] OF 55-167 (ISOFORM 2)</scope>
    <source>
        <strain>C57BL/6J</strain>
        <tissue>Cecum</tissue>
        <tissue>Heart</tissue>
    </source>
</reference>
<reference key="3">
    <citation type="journal article" date="2018" name="Dev. Cell">
        <title>CRISPR screens uncover genes that regulate target cell sensitivity to the morphogen sonic hedgehog.</title>
        <authorList>
            <person name="Pusapati G.V."/>
            <person name="Kong J.H."/>
            <person name="Patel B.B."/>
            <person name="Krishnan A."/>
            <person name="Sagner A."/>
            <person name="Kinnebrew M."/>
            <person name="Briscoe J."/>
            <person name="Aravind L."/>
            <person name="Rohatgi R."/>
        </authorList>
    </citation>
    <scope>FUNCTION</scope>
    <scope>SUBCELLULAR LOCATION</scope>
    <scope>DEVELOPMENTAL STAGE</scope>
</reference>
<gene>
    <name evidence="6" type="primary">Mosmo</name>
    <name evidence="4" type="synonym">Atthog</name>
</gene>
<dbReference type="EMBL" id="BC030336">
    <property type="protein sequence ID" value="AAH30336.1"/>
    <property type="status" value="ALT_INIT"/>
    <property type="molecule type" value="mRNA"/>
</dbReference>
<dbReference type="EMBL" id="BC053950">
    <property type="status" value="NOT_ANNOTATED_CDS"/>
    <property type="molecule type" value="mRNA"/>
</dbReference>
<dbReference type="EMBL" id="AK052350">
    <property type="protein sequence ID" value="BAC34951.1"/>
    <property type="molecule type" value="mRNA"/>
</dbReference>
<dbReference type="EMBL" id="AK162324">
    <property type="protein sequence ID" value="BAE36854.1"/>
    <property type="molecule type" value="mRNA"/>
</dbReference>
<dbReference type="CCDS" id="CCDS52381.1">
    <molecule id="Q8C784-1"/>
</dbReference>
<dbReference type="RefSeq" id="NP_001158052.1">
    <molecule id="Q8C784-1"/>
    <property type="nucleotide sequence ID" value="NM_001164580.2"/>
</dbReference>
<dbReference type="RefSeq" id="NP_001407405.1">
    <molecule id="Q8C784-2"/>
    <property type="nucleotide sequence ID" value="NM_001420476.1"/>
</dbReference>
<dbReference type="RefSeq" id="XP_006507752.1">
    <property type="nucleotide sequence ID" value="XM_006507689.2"/>
</dbReference>
<dbReference type="SMR" id="Q8C784"/>
<dbReference type="FunCoup" id="Q8C784">
    <property type="interactions" value="1640"/>
</dbReference>
<dbReference type="STRING" id="10090.ENSMUSP00000055934"/>
<dbReference type="GlyCosmos" id="Q8C784">
    <property type="glycosylation" value="1 site, No reported glycans"/>
</dbReference>
<dbReference type="GlyGen" id="Q8C784">
    <property type="glycosylation" value="1 site"/>
</dbReference>
<dbReference type="PhosphoSitePlus" id="Q8C784"/>
<dbReference type="jPOST" id="Q8C784"/>
<dbReference type="PaxDb" id="10090-ENSMUSP00000055934"/>
<dbReference type="Ensembl" id="ENSMUST00000060175.8">
    <molecule id="Q8C784-1"/>
    <property type="protein sequence ID" value="ENSMUSP00000055934.7"/>
    <property type="gene ID" value="ENSMUSG00000046096.8"/>
</dbReference>
<dbReference type="GeneID" id="233812"/>
<dbReference type="KEGG" id="mmu:233812"/>
<dbReference type="UCSC" id="uc009jmx.2">
    <molecule id="Q8C784-1"/>
    <property type="organism name" value="mouse"/>
</dbReference>
<dbReference type="AGR" id="MGI:2446240"/>
<dbReference type="CTD" id="730094"/>
<dbReference type="MGI" id="MGI:2446240">
    <property type="gene designation" value="Mosmo"/>
</dbReference>
<dbReference type="VEuPathDB" id="HostDB:ENSMUSG00000046096"/>
<dbReference type="eggNOG" id="ENOG502R4TC">
    <property type="taxonomic scope" value="Eukaryota"/>
</dbReference>
<dbReference type="GeneTree" id="ENSGT00390000018266"/>
<dbReference type="HOGENOM" id="CLU_111296_0_0_1"/>
<dbReference type="InParanoid" id="Q8C784"/>
<dbReference type="OMA" id="FIFKVCP"/>
<dbReference type="OrthoDB" id="8768722at2759"/>
<dbReference type="PhylomeDB" id="Q8C784"/>
<dbReference type="TreeFam" id="TF324757"/>
<dbReference type="BioGRID-ORCS" id="233812">
    <property type="hits" value="6 hits in 78 CRISPR screens"/>
</dbReference>
<dbReference type="ChiTaRS" id="Mosmo">
    <property type="organism name" value="mouse"/>
</dbReference>
<dbReference type="PRO" id="PR:Q8C784"/>
<dbReference type="Proteomes" id="UP000000589">
    <property type="component" value="Chromosome 7"/>
</dbReference>
<dbReference type="RNAct" id="Q8C784">
    <property type="molecule type" value="protein"/>
</dbReference>
<dbReference type="Bgee" id="ENSMUSG00000046096">
    <property type="expression patterns" value="Expressed in otolith organ and 222 other cell types or tissues"/>
</dbReference>
<dbReference type="ExpressionAtlas" id="Q8C784">
    <property type="expression patterns" value="baseline and differential"/>
</dbReference>
<dbReference type="GO" id="GO:0060170">
    <property type="term" value="C:ciliary membrane"/>
    <property type="evidence" value="ECO:0000314"/>
    <property type="project" value="UniProtKB"/>
</dbReference>
<dbReference type="GO" id="GO:0005794">
    <property type="term" value="C:Golgi apparatus"/>
    <property type="evidence" value="ECO:0000314"/>
    <property type="project" value="UniProtKB"/>
</dbReference>
<dbReference type="GO" id="GO:0005886">
    <property type="term" value="C:plasma membrane"/>
    <property type="evidence" value="ECO:0000314"/>
    <property type="project" value="UniProtKB"/>
</dbReference>
<dbReference type="GO" id="GO:0030154">
    <property type="term" value="P:cell differentiation"/>
    <property type="evidence" value="ECO:0007669"/>
    <property type="project" value="UniProtKB-KW"/>
</dbReference>
<dbReference type="GO" id="GO:0030326">
    <property type="term" value="P:embryonic limb morphogenesis"/>
    <property type="evidence" value="ECO:0000315"/>
    <property type="project" value="MGI"/>
</dbReference>
<dbReference type="GO" id="GO:0048706">
    <property type="term" value="P:embryonic skeletal system development"/>
    <property type="evidence" value="ECO:0000315"/>
    <property type="project" value="MGI"/>
</dbReference>
<dbReference type="GO" id="GO:0010467">
    <property type="term" value="P:gene expression"/>
    <property type="evidence" value="ECO:0000315"/>
    <property type="project" value="MGI"/>
</dbReference>
<dbReference type="GO" id="GO:0007507">
    <property type="term" value="P:heart development"/>
    <property type="evidence" value="ECO:0000315"/>
    <property type="project" value="MGI"/>
</dbReference>
<dbReference type="GO" id="GO:0001701">
    <property type="term" value="P:in utero embryonic development"/>
    <property type="evidence" value="ECO:0000315"/>
    <property type="project" value="MGI"/>
</dbReference>
<dbReference type="GO" id="GO:0060972">
    <property type="term" value="P:left/right pattern formation"/>
    <property type="evidence" value="ECO:0000315"/>
    <property type="project" value="MGI"/>
</dbReference>
<dbReference type="GO" id="GO:0030324">
    <property type="term" value="P:lung development"/>
    <property type="evidence" value="ECO:0000315"/>
    <property type="project" value="MGI"/>
</dbReference>
<dbReference type="GO" id="GO:0045879">
    <property type="term" value="P:negative regulation of smoothened signaling pathway"/>
    <property type="evidence" value="ECO:0000315"/>
    <property type="project" value="UniProtKB"/>
</dbReference>
<dbReference type="GO" id="GO:0008104">
    <property type="term" value="P:protein localization"/>
    <property type="evidence" value="ECO:0000315"/>
    <property type="project" value="MGI"/>
</dbReference>
<dbReference type="GO" id="GO:0045664">
    <property type="term" value="P:regulation of neuron differentiation"/>
    <property type="evidence" value="ECO:0000315"/>
    <property type="project" value="UniProtKB"/>
</dbReference>
<dbReference type="GO" id="GO:0031647">
    <property type="term" value="P:regulation of protein stability"/>
    <property type="evidence" value="ECO:0000315"/>
    <property type="project" value="UniProtKB"/>
</dbReference>
<dbReference type="GO" id="GO:0007224">
    <property type="term" value="P:smoothened signaling pathway"/>
    <property type="evidence" value="ECO:0000315"/>
    <property type="project" value="MGI"/>
</dbReference>
<dbReference type="FunFam" id="1.20.140.150:FF:000006">
    <property type="entry name" value="uncharacterized protein C16orf52 homolog"/>
    <property type="match status" value="1"/>
</dbReference>
<dbReference type="Gene3D" id="1.20.140.150">
    <property type="match status" value="1"/>
</dbReference>
<dbReference type="InterPro" id="IPR037663">
    <property type="entry name" value="Mosmo"/>
</dbReference>
<dbReference type="PANTHER" id="PTHR31186">
    <property type="entry name" value="MODULATOR OF SMOOTHENED PROTEIN"/>
    <property type="match status" value="1"/>
</dbReference>
<dbReference type="PANTHER" id="PTHR31186:SF1">
    <property type="entry name" value="MODULATOR OF SMOOTHENED PROTEIN"/>
    <property type="match status" value="1"/>
</dbReference>
<dbReference type="Pfam" id="PF18800">
    <property type="entry name" value="Atthog"/>
    <property type="match status" value="1"/>
</dbReference>
<sequence length="167" mass="18250">MDKLTIISGCLFLAADIFAIASIANPDWINTGESAGALTVGLVRQCQTIHGRDRTCIPPRLPPEWVTTLFFIIMGIISLTVTCGLLVASHWRREATKYARWIAFTGMILFCMAALIFPIGFYINEVGGQPYKLPNNTVVGSSYVLFVLSIFFTIVGLLFAGKVCLPG</sequence>
<proteinExistence type="evidence at transcript level"/>
<name>MOSMO_MOUSE</name>
<organism>
    <name type="scientific">Mus musculus</name>
    <name type="common">Mouse</name>
    <dbReference type="NCBI Taxonomy" id="10090"/>
    <lineage>
        <taxon>Eukaryota</taxon>
        <taxon>Metazoa</taxon>
        <taxon>Chordata</taxon>
        <taxon>Craniata</taxon>
        <taxon>Vertebrata</taxon>
        <taxon>Euteleostomi</taxon>
        <taxon>Mammalia</taxon>
        <taxon>Eutheria</taxon>
        <taxon>Euarchontoglires</taxon>
        <taxon>Glires</taxon>
        <taxon>Rodentia</taxon>
        <taxon>Myomorpha</taxon>
        <taxon>Muroidea</taxon>
        <taxon>Muridae</taxon>
        <taxon>Murinae</taxon>
        <taxon>Mus</taxon>
        <taxon>Mus</taxon>
    </lineage>
</organism>
<feature type="chain" id="PRO_0000271083" description="Modulator of smoothened protein">
    <location>
        <begin position="1"/>
        <end position="167"/>
    </location>
</feature>
<feature type="transmembrane region" description="Helical" evidence="1">
    <location>
        <begin position="7"/>
        <end position="29"/>
    </location>
</feature>
<feature type="transmembrane region" description="Helical" evidence="1">
    <location>
        <begin position="68"/>
        <end position="88"/>
    </location>
</feature>
<feature type="transmembrane region" description="Helical" evidence="1">
    <location>
        <begin position="101"/>
        <end position="121"/>
    </location>
</feature>
<feature type="transmembrane region" description="Helical" evidence="1">
    <location>
        <begin position="139"/>
        <end position="159"/>
    </location>
</feature>
<feature type="glycosylation site" description="N-linked (GlcNAc...) asparagine" evidence="1">
    <location>
        <position position="135"/>
    </location>
</feature>
<feature type="splice variant" id="VSP_022277" description="In isoform 2." evidence="3">
    <original>MILFCMAALIFPIGFYINEVGGQPYKLPNNTVVGSSYVLFVLSIFFTIVGLLFAGKVCLPG</original>
    <variation>RWYSEMGYLLRSDLEWKTWVSPHQCVCYSAVSVLNCE</variation>
    <location>
        <begin position="107"/>
        <end position="167"/>
    </location>
</feature>
<accession>Q8C784</accession>
<accession>Q3TS22</accession>
<accession>Q8K0V1</accession>
<protein>
    <recommendedName>
        <fullName evidence="6">Modulator of smoothened protein</fullName>
    </recommendedName>
    <alternativeName>
        <fullName evidence="4">Attenuator of hedgehog</fullName>
    </alternativeName>
</protein>
<keyword id="KW-0025">Alternative splicing</keyword>
<keyword id="KW-1003">Cell membrane</keyword>
<keyword id="KW-0966">Cell projection</keyword>
<keyword id="KW-0221">Differentiation</keyword>
<keyword id="KW-0325">Glycoprotein</keyword>
<keyword id="KW-0472">Membrane</keyword>
<keyword id="KW-1185">Reference proteome</keyword>
<keyword id="KW-0812">Transmembrane</keyword>
<keyword id="KW-1133">Transmembrane helix</keyword>
<comment type="function">
    <text evidence="2">Acts as a negative regulator of hedgehog signaling probably by promoting internalization and subsequent degradation of smoothened protein (SMO) present in the ciliary membrane (PubMed:29290584). Plays a role in sonic hedgehog (SHH)-induced spinal neural progenitor cells differentiation (PubMed:29290584).</text>
</comment>
<comment type="subcellular location">
    <subcellularLocation>
        <location evidence="2">Cell projection</location>
        <location evidence="2">Cilium membrane</location>
        <topology evidence="1">Multi-pass membrane protein</topology>
    </subcellularLocation>
    <subcellularLocation>
        <location evidence="2">Cell membrane</location>
        <topology evidence="1">Multi-pass membrane protein</topology>
    </subcellularLocation>
</comment>
<comment type="alternative products">
    <event type="alternative splicing"/>
    <isoform>
        <id>Q8C784-1</id>
        <name>1</name>
        <sequence type="displayed"/>
    </isoform>
    <isoform>
        <id>Q8C784-2</id>
        <name>2</name>
        <sequence type="described" ref="VSP_022277"/>
    </isoform>
</comment>
<comment type="developmental stage">
    <text evidence="2">Expressed in the ventral neural tube at 11.5 dpc.</text>
</comment>
<comment type="sequence caution" evidence="5">
    <conflict type="erroneous initiation">
        <sequence resource="EMBL-CDS" id="AAH30336"/>
    </conflict>
</comment>
<evidence type="ECO:0000255" key="1"/>
<evidence type="ECO:0000269" key="2">
    <source>
    </source>
</evidence>
<evidence type="ECO:0000303" key="3">
    <source>
    </source>
</evidence>
<evidence type="ECO:0000303" key="4">
    <source>
    </source>
</evidence>
<evidence type="ECO:0000305" key="5"/>
<evidence type="ECO:0000312" key="6">
    <source>
        <dbReference type="MGI" id="MGI:2446240"/>
    </source>
</evidence>